<keyword id="KW-0479">Metal-binding</keyword>
<keyword id="KW-0862">Zinc</keyword>
<reference key="1">
    <citation type="journal article" date="2011" name="J. Bacteriol.">
        <title>Comparative genomics of 28 Salmonella enterica isolates: evidence for CRISPR-mediated adaptive sublineage evolution.</title>
        <authorList>
            <person name="Fricke W.F."/>
            <person name="Mammel M.K."/>
            <person name="McDermott P.F."/>
            <person name="Tartera C."/>
            <person name="White D.G."/>
            <person name="Leclerc J.E."/>
            <person name="Ravel J."/>
            <person name="Cebula T.A."/>
        </authorList>
    </citation>
    <scope>NUCLEOTIDE SEQUENCE [LARGE SCALE GENOMIC DNA]</scope>
    <source>
        <strain>CT_02021853</strain>
    </source>
</reference>
<comment type="function">
    <text evidence="1">Inhibits all the catalytic activities of DNA gyrase by preventing its interaction with DNA. Acts by binding directly to the C-terminal domain of GyrB, which probably disrupts DNA binding by the gyrase.</text>
</comment>
<comment type="cofactor">
    <cofactor evidence="1">
        <name>Zn(2+)</name>
        <dbReference type="ChEBI" id="CHEBI:29105"/>
    </cofactor>
    <text evidence="1">Binds 1 zinc ion.</text>
</comment>
<comment type="subunit">
    <text evidence="1">Interacts with GyrB.</text>
</comment>
<comment type="similarity">
    <text evidence="1">Belongs to the DNA gyrase inhibitor YacG family.</text>
</comment>
<proteinExistence type="inferred from homology"/>
<sequence>MSDVTVVNCPTCGKPVVWGEISPFRPFCSKRCQLIDLGEWAAEEKRIASSGDQSDSDDWSEER</sequence>
<organism>
    <name type="scientific">Salmonella dublin (strain CT_02021853)</name>
    <dbReference type="NCBI Taxonomy" id="439851"/>
    <lineage>
        <taxon>Bacteria</taxon>
        <taxon>Pseudomonadati</taxon>
        <taxon>Pseudomonadota</taxon>
        <taxon>Gammaproteobacteria</taxon>
        <taxon>Enterobacterales</taxon>
        <taxon>Enterobacteriaceae</taxon>
        <taxon>Salmonella</taxon>
    </lineage>
</organism>
<dbReference type="EMBL" id="CP001144">
    <property type="protein sequence ID" value="ACH74846.1"/>
    <property type="molecule type" value="Genomic_DNA"/>
</dbReference>
<dbReference type="RefSeq" id="WP_001286419.1">
    <property type="nucleotide sequence ID" value="NC_011205.1"/>
</dbReference>
<dbReference type="SMR" id="B5FI83"/>
<dbReference type="KEGG" id="sed:SeD_A0149"/>
<dbReference type="HOGENOM" id="CLU_178280_3_1_6"/>
<dbReference type="Proteomes" id="UP000008322">
    <property type="component" value="Chromosome"/>
</dbReference>
<dbReference type="GO" id="GO:0008657">
    <property type="term" value="F:DNA topoisomerase type II (double strand cut, ATP-hydrolyzing) inhibitor activity"/>
    <property type="evidence" value="ECO:0007669"/>
    <property type="project" value="UniProtKB-UniRule"/>
</dbReference>
<dbReference type="GO" id="GO:0008270">
    <property type="term" value="F:zinc ion binding"/>
    <property type="evidence" value="ECO:0007669"/>
    <property type="project" value="UniProtKB-UniRule"/>
</dbReference>
<dbReference type="GO" id="GO:0006355">
    <property type="term" value="P:regulation of DNA-templated transcription"/>
    <property type="evidence" value="ECO:0007669"/>
    <property type="project" value="InterPro"/>
</dbReference>
<dbReference type="Gene3D" id="3.30.50.10">
    <property type="entry name" value="Erythroid Transcription Factor GATA-1, subunit A"/>
    <property type="match status" value="1"/>
</dbReference>
<dbReference type="HAMAP" id="MF_00649">
    <property type="entry name" value="DNA_gyrase_inhibitor_YacG"/>
    <property type="match status" value="1"/>
</dbReference>
<dbReference type="InterPro" id="IPR005584">
    <property type="entry name" value="DNA_gyrase_inhibitor_YacG"/>
</dbReference>
<dbReference type="InterPro" id="IPR013088">
    <property type="entry name" value="Znf_NHR/GATA"/>
</dbReference>
<dbReference type="NCBIfam" id="NF001638">
    <property type="entry name" value="PRK00418.1"/>
    <property type="match status" value="1"/>
</dbReference>
<dbReference type="PANTHER" id="PTHR36150">
    <property type="entry name" value="DNA GYRASE INHIBITOR YACG"/>
    <property type="match status" value="1"/>
</dbReference>
<dbReference type="PANTHER" id="PTHR36150:SF1">
    <property type="entry name" value="DNA GYRASE INHIBITOR YACG"/>
    <property type="match status" value="1"/>
</dbReference>
<dbReference type="Pfam" id="PF03884">
    <property type="entry name" value="YacG"/>
    <property type="match status" value="1"/>
</dbReference>
<dbReference type="SUPFAM" id="SSF57716">
    <property type="entry name" value="Glucocorticoid receptor-like (DNA-binding domain)"/>
    <property type="match status" value="1"/>
</dbReference>
<gene>
    <name evidence="1" type="primary">yacG</name>
    <name type="ordered locus">SeD_A0149</name>
</gene>
<accession>B5FI83</accession>
<feature type="chain" id="PRO_1000130972" description="DNA gyrase inhibitor YacG">
    <location>
        <begin position="1"/>
        <end position="63"/>
    </location>
</feature>
<feature type="binding site" evidence="1">
    <location>
        <position position="9"/>
    </location>
    <ligand>
        <name>Zn(2+)</name>
        <dbReference type="ChEBI" id="CHEBI:29105"/>
    </ligand>
</feature>
<feature type="binding site" evidence="1">
    <location>
        <position position="12"/>
    </location>
    <ligand>
        <name>Zn(2+)</name>
        <dbReference type="ChEBI" id="CHEBI:29105"/>
    </ligand>
</feature>
<feature type="binding site" evidence="1">
    <location>
        <position position="28"/>
    </location>
    <ligand>
        <name>Zn(2+)</name>
        <dbReference type="ChEBI" id="CHEBI:29105"/>
    </ligand>
</feature>
<feature type="binding site" evidence="1">
    <location>
        <position position="32"/>
    </location>
    <ligand>
        <name>Zn(2+)</name>
        <dbReference type="ChEBI" id="CHEBI:29105"/>
    </ligand>
</feature>
<protein>
    <recommendedName>
        <fullName evidence="1">DNA gyrase inhibitor YacG</fullName>
    </recommendedName>
</protein>
<evidence type="ECO:0000255" key="1">
    <source>
        <dbReference type="HAMAP-Rule" id="MF_00649"/>
    </source>
</evidence>
<name>YACG_SALDC</name>